<sequence length="202" mass="22039">MALQETIEQTVTGLGYELVEIERTSGGLLRVTIDMPYLAGTAPGAEQFINAEDCEKVTRQLQFVLEVEGAEYSRLEVSSPGIDRPLRSEKDFERFAGELIDITLKAPIGVAASAGSTVSASRKKFRGTLERAEPVDGKPGWQIVWSDEPAVKPGQKISKKRIPAPLQALGFTLDEINQARLAPVVDFKGRRPKSVADTSIDK</sequence>
<protein>
    <recommendedName>
        <fullName evidence="1">Ribosome maturation factor RimP</fullName>
    </recommendedName>
</protein>
<reference key="1">
    <citation type="journal article" date="2009" name="Environ. Microbiol.">
        <title>The genome of Polaromonas naphthalenivorans strain CJ2, isolated from coal tar-contaminated sediment, reveals physiological and metabolic versatility and evolution through extensive horizontal gene transfer.</title>
        <authorList>
            <person name="Yagi J.M."/>
            <person name="Sims D."/>
            <person name="Brettin T."/>
            <person name="Bruce D."/>
            <person name="Madsen E.L."/>
        </authorList>
    </citation>
    <scope>NUCLEOTIDE SEQUENCE [LARGE SCALE GENOMIC DNA]</scope>
    <source>
        <strain>CJ2</strain>
    </source>
</reference>
<proteinExistence type="inferred from homology"/>
<evidence type="ECO:0000255" key="1">
    <source>
        <dbReference type="HAMAP-Rule" id="MF_01077"/>
    </source>
</evidence>
<dbReference type="EMBL" id="CP000529">
    <property type="protein sequence ID" value="ABM37322.1"/>
    <property type="molecule type" value="Genomic_DNA"/>
</dbReference>
<dbReference type="RefSeq" id="WP_011801402.1">
    <property type="nucleotide sequence ID" value="NC_008781.1"/>
</dbReference>
<dbReference type="SMR" id="A1VNU4"/>
<dbReference type="STRING" id="365044.Pnap_2013"/>
<dbReference type="KEGG" id="pna:Pnap_2013"/>
<dbReference type="eggNOG" id="COG0779">
    <property type="taxonomic scope" value="Bacteria"/>
</dbReference>
<dbReference type="HOGENOM" id="CLU_070525_1_0_4"/>
<dbReference type="OrthoDB" id="9805006at2"/>
<dbReference type="Proteomes" id="UP000000644">
    <property type="component" value="Chromosome"/>
</dbReference>
<dbReference type="GO" id="GO:0005829">
    <property type="term" value="C:cytosol"/>
    <property type="evidence" value="ECO:0007669"/>
    <property type="project" value="TreeGrafter"/>
</dbReference>
<dbReference type="GO" id="GO:0000028">
    <property type="term" value="P:ribosomal small subunit assembly"/>
    <property type="evidence" value="ECO:0007669"/>
    <property type="project" value="TreeGrafter"/>
</dbReference>
<dbReference type="GO" id="GO:0006412">
    <property type="term" value="P:translation"/>
    <property type="evidence" value="ECO:0007669"/>
    <property type="project" value="TreeGrafter"/>
</dbReference>
<dbReference type="CDD" id="cd01734">
    <property type="entry name" value="YlxS_C"/>
    <property type="match status" value="1"/>
</dbReference>
<dbReference type="Gene3D" id="3.30.300.70">
    <property type="entry name" value="RimP-like superfamily, N-terminal"/>
    <property type="match status" value="1"/>
</dbReference>
<dbReference type="HAMAP" id="MF_01077">
    <property type="entry name" value="RimP"/>
    <property type="match status" value="1"/>
</dbReference>
<dbReference type="InterPro" id="IPR003728">
    <property type="entry name" value="Ribosome_maturation_RimP"/>
</dbReference>
<dbReference type="InterPro" id="IPR028998">
    <property type="entry name" value="RimP_C"/>
</dbReference>
<dbReference type="InterPro" id="IPR036847">
    <property type="entry name" value="RimP_C_sf"/>
</dbReference>
<dbReference type="InterPro" id="IPR028989">
    <property type="entry name" value="RimP_N"/>
</dbReference>
<dbReference type="InterPro" id="IPR035956">
    <property type="entry name" value="RimP_N_sf"/>
</dbReference>
<dbReference type="NCBIfam" id="NF000929">
    <property type="entry name" value="PRK00092.2-1"/>
    <property type="match status" value="1"/>
</dbReference>
<dbReference type="NCBIfam" id="NF011235">
    <property type="entry name" value="PRK14642.1"/>
    <property type="match status" value="1"/>
</dbReference>
<dbReference type="PANTHER" id="PTHR33867">
    <property type="entry name" value="RIBOSOME MATURATION FACTOR RIMP"/>
    <property type="match status" value="1"/>
</dbReference>
<dbReference type="PANTHER" id="PTHR33867:SF1">
    <property type="entry name" value="RIBOSOME MATURATION FACTOR RIMP"/>
    <property type="match status" value="1"/>
</dbReference>
<dbReference type="Pfam" id="PF02576">
    <property type="entry name" value="RimP_N"/>
    <property type="match status" value="1"/>
</dbReference>
<dbReference type="SUPFAM" id="SSF74942">
    <property type="entry name" value="YhbC-like, C-terminal domain"/>
    <property type="match status" value="1"/>
</dbReference>
<dbReference type="SUPFAM" id="SSF75420">
    <property type="entry name" value="YhbC-like, N-terminal domain"/>
    <property type="match status" value="1"/>
</dbReference>
<keyword id="KW-0963">Cytoplasm</keyword>
<keyword id="KW-1185">Reference proteome</keyword>
<keyword id="KW-0690">Ribosome biogenesis</keyword>
<name>RIMP_POLNA</name>
<feature type="chain" id="PRO_1000136784" description="Ribosome maturation factor RimP">
    <location>
        <begin position="1"/>
        <end position="202"/>
    </location>
</feature>
<organism>
    <name type="scientific">Polaromonas naphthalenivorans (strain CJ2)</name>
    <dbReference type="NCBI Taxonomy" id="365044"/>
    <lineage>
        <taxon>Bacteria</taxon>
        <taxon>Pseudomonadati</taxon>
        <taxon>Pseudomonadota</taxon>
        <taxon>Betaproteobacteria</taxon>
        <taxon>Burkholderiales</taxon>
        <taxon>Comamonadaceae</taxon>
        <taxon>Polaromonas</taxon>
    </lineage>
</organism>
<accession>A1VNU4</accession>
<gene>
    <name evidence="1" type="primary">rimP</name>
    <name type="ordered locus">Pnap_2013</name>
</gene>
<comment type="function">
    <text evidence="1">Required for maturation of 30S ribosomal subunits.</text>
</comment>
<comment type="subcellular location">
    <subcellularLocation>
        <location evidence="1">Cytoplasm</location>
    </subcellularLocation>
</comment>
<comment type="similarity">
    <text evidence="1">Belongs to the RimP family.</text>
</comment>